<reference key="1">
    <citation type="journal article" date="2008" name="PLoS ONE">
        <title>Genome biology of Actinobacillus pleuropneumoniae JL03, an isolate of serotype 3 prevalent in China.</title>
        <authorList>
            <person name="Xu Z."/>
            <person name="Zhou Y."/>
            <person name="Li L."/>
            <person name="Zhou R."/>
            <person name="Xiao S."/>
            <person name="Wan Y."/>
            <person name="Zhang S."/>
            <person name="Wang K."/>
            <person name="Li W."/>
            <person name="Li L."/>
            <person name="Jin H."/>
            <person name="Kang M."/>
            <person name="Dalai B."/>
            <person name="Li T."/>
            <person name="Liu L."/>
            <person name="Cheng Y."/>
            <person name="Zhang L."/>
            <person name="Xu T."/>
            <person name="Zheng H."/>
            <person name="Pu S."/>
            <person name="Wang B."/>
            <person name="Gu W."/>
            <person name="Zhang X.L."/>
            <person name="Zhu G.-F."/>
            <person name="Wang S."/>
            <person name="Zhao G.-P."/>
            <person name="Chen H."/>
        </authorList>
    </citation>
    <scope>NUCLEOTIDE SEQUENCE [LARGE SCALE GENOMIC DNA]</scope>
    <source>
        <strain>JL03</strain>
    </source>
</reference>
<dbReference type="EC" id="2.1.1.170" evidence="1"/>
<dbReference type="EMBL" id="CP000687">
    <property type="protein sequence ID" value="ABY70239.1"/>
    <property type="molecule type" value="Genomic_DNA"/>
</dbReference>
<dbReference type="RefSeq" id="WP_005605652.1">
    <property type="nucleotide sequence ID" value="NC_010278.1"/>
</dbReference>
<dbReference type="SMR" id="B0BRY0"/>
<dbReference type="KEGG" id="apj:APJL_1687"/>
<dbReference type="HOGENOM" id="CLU_065341_2_2_6"/>
<dbReference type="Proteomes" id="UP000008547">
    <property type="component" value="Chromosome"/>
</dbReference>
<dbReference type="GO" id="GO:0005829">
    <property type="term" value="C:cytosol"/>
    <property type="evidence" value="ECO:0007669"/>
    <property type="project" value="TreeGrafter"/>
</dbReference>
<dbReference type="GO" id="GO:0070043">
    <property type="term" value="F:rRNA (guanine-N7-)-methyltransferase activity"/>
    <property type="evidence" value="ECO:0007669"/>
    <property type="project" value="UniProtKB-UniRule"/>
</dbReference>
<dbReference type="CDD" id="cd02440">
    <property type="entry name" value="AdoMet_MTases"/>
    <property type="match status" value="1"/>
</dbReference>
<dbReference type="Gene3D" id="3.40.50.150">
    <property type="entry name" value="Vaccinia Virus protein VP39"/>
    <property type="match status" value="1"/>
</dbReference>
<dbReference type="HAMAP" id="MF_00074">
    <property type="entry name" value="16SrRNA_methyltr_G"/>
    <property type="match status" value="1"/>
</dbReference>
<dbReference type="InterPro" id="IPR003682">
    <property type="entry name" value="rRNA_ssu_MeTfrase_G"/>
</dbReference>
<dbReference type="InterPro" id="IPR029063">
    <property type="entry name" value="SAM-dependent_MTases_sf"/>
</dbReference>
<dbReference type="NCBIfam" id="TIGR00138">
    <property type="entry name" value="rsmG_gidB"/>
    <property type="match status" value="1"/>
</dbReference>
<dbReference type="PANTHER" id="PTHR31760">
    <property type="entry name" value="S-ADENOSYL-L-METHIONINE-DEPENDENT METHYLTRANSFERASES SUPERFAMILY PROTEIN"/>
    <property type="match status" value="1"/>
</dbReference>
<dbReference type="PANTHER" id="PTHR31760:SF0">
    <property type="entry name" value="S-ADENOSYL-L-METHIONINE-DEPENDENT METHYLTRANSFERASES SUPERFAMILY PROTEIN"/>
    <property type="match status" value="1"/>
</dbReference>
<dbReference type="Pfam" id="PF02527">
    <property type="entry name" value="GidB"/>
    <property type="match status" value="1"/>
</dbReference>
<dbReference type="PIRSF" id="PIRSF003078">
    <property type="entry name" value="GidB"/>
    <property type="match status" value="1"/>
</dbReference>
<dbReference type="SUPFAM" id="SSF53335">
    <property type="entry name" value="S-adenosyl-L-methionine-dependent methyltransferases"/>
    <property type="match status" value="1"/>
</dbReference>
<accession>B0BRY0</accession>
<comment type="function">
    <text evidence="1">Specifically methylates the N7 position of guanine in position 527 of 16S rRNA.</text>
</comment>
<comment type="catalytic activity">
    <reaction evidence="1">
        <text>guanosine(527) in 16S rRNA + S-adenosyl-L-methionine = N(7)-methylguanosine(527) in 16S rRNA + S-adenosyl-L-homocysteine</text>
        <dbReference type="Rhea" id="RHEA:42732"/>
        <dbReference type="Rhea" id="RHEA-COMP:10209"/>
        <dbReference type="Rhea" id="RHEA-COMP:10210"/>
        <dbReference type="ChEBI" id="CHEBI:57856"/>
        <dbReference type="ChEBI" id="CHEBI:59789"/>
        <dbReference type="ChEBI" id="CHEBI:74269"/>
        <dbReference type="ChEBI" id="CHEBI:74480"/>
        <dbReference type="EC" id="2.1.1.170"/>
    </reaction>
</comment>
<comment type="subcellular location">
    <subcellularLocation>
        <location evidence="1">Cytoplasm</location>
    </subcellularLocation>
</comment>
<comment type="similarity">
    <text evidence="1">Belongs to the methyltransferase superfamily. RNA methyltransferase RsmG family.</text>
</comment>
<name>RSMG_ACTPJ</name>
<protein>
    <recommendedName>
        <fullName evidence="1">Ribosomal RNA small subunit methyltransferase G</fullName>
        <ecNumber evidence="1">2.1.1.170</ecNumber>
    </recommendedName>
    <alternativeName>
        <fullName evidence="1">16S rRNA 7-methylguanosine methyltransferase</fullName>
        <shortName evidence="1">16S rRNA m7G methyltransferase</shortName>
    </alternativeName>
</protein>
<organism>
    <name type="scientific">Actinobacillus pleuropneumoniae serotype 3 (strain JL03)</name>
    <dbReference type="NCBI Taxonomy" id="434271"/>
    <lineage>
        <taxon>Bacteria</taxon>
        <taxon>Pseudomonadati</taxon>
        <taxon>Pseudomonadota</taxon>
        <taxon>Gammaproteobacteria</taxon>
        <taxon>Pasteurellales</taxon>
        <taxon>Pasteurellaceae</taxon>
        <taxon>Actinobacillus</taxon>
    </lineage>
</organism>
<gene>
    <name evidence="1" type="primary">rsmG</name>
    <name type="ordered locus">APJL_1687</name>
</gene>
<proteinExistence type="inferred from homology"/>
<sequence>MRQKLDRLLEQAQINLTDQQKEQLVGFVRLLDKWNKAYNLTSVRNPDEMLVKHILDSLVVSEHLQGNNFIDVGTGPGLPGIPLAIANPDKQFVLLDSLGKRITFIKNALRELGITNVTPVLSRVEEYKEQTFDGVLSRAFASLNDMVDWCYHLPNPQGKFYALKGIYAESEVQEIKNPIWLEKVIPLSVPELVGERHLVLLNKPN</sequence>
<feature type="chain" id="PRO_0000342902" description="Ribosomal RNA small subunit methyltransferase G">
    <location>
        <begin position="1"/>
        <end position="205"/>
    </location>
</feature>
<feature type="binding site" evidence="1">
    <location>
        <position position="73"/>
    </location>
    <ligand>
        <name>S-adenosyl-L-methionine</name>
        <dbReference type="ChEBI" id="CHEBI:59789"/>
    </ligand>
</feature>
<feature type="binding site" evidence="1">
    <location>
        <position position="78"/>
    </location>
    <ligand>
        <name>S-adenosyl-L-methionine</name>
        <dbReference type="ChEBI" id="CHEBI:59789"/>
    </ligand>
</feature>
<feature type="binding site" evidence="1">
    <location>
        <begin position="124"/>
        <end position="125"/>
    </location>
    <ligand>
        <name>S-adenosyl-L-methionine</name>
        <dbReference type="ChEBI" id="CHEBI:59789"/>
    </ligand>
</feature>
<feature type="binding site" evidence="1">
    <location>
        <position position="138"/>
    </location>
    <ligand>
        <name>S-adenosyl-L-methionine</name>
        <dbReference type="ChEBI" id="CHEBI:59789"/>
    </ligand>
</feature>
<keyword id="KW-0963">Cytoplasm</keyword>
<keyword id="KW-0489">Methyltransferase</keyword>
<keyword id="KW-0698">rRNA processing</keyword>
<keyword id="KW-0949">S-adenosyl-L-methionine</keyword>
<keyword id="KW-0808">Transferase</keyword>
<evidence type="ECO:0000255" key="1">
    <source>
        <dbReference type="HAMAP-Rule" id="MF_00074"/>
    </source>
</evidence>